<feature type="chain" id="PRO_1000212893" description="Biosynthetic peptidoglycan transglycosylase">
    <location>
        <begin position="1"/>
        <end position="240"/>
    </location>
</feature>
<feature type="transmembrane region" description="Helical" evidence="1">
    <location>
        <begin position="9"/>
        <end position="31"/>
    </location>
</feature>
<evidence type="ECO:0000255" key="1">
    <source>
        <dbReference type="HAMAP-Rule" id="MF_00766"/>
    </source>
</evidence>
<dbReference type="EC" id="2.4.99.28" evidence="1"/>
<dbReference type="EMBL" id="AM181176">
    <property type="protein sequence ID" value="CAY53167.1"/>
    <property type="molecule type" value="Genomic_DNA"/>
</dbReference>
<dbReference type="RefSeq" id="WP_015886356.1">
    <property type="nucleotide sequence ID" value="NC_012660.1"/>
</dbReference>
<dbReference type="SMR" id="C3K3M0"/>
<dbReference type="STRING" id="294.SRM1_05428"/>
<dbReference type="CAZy" id="GT51">
    <property type="family name" value="Glycosyltransferase Family 51"/>
</dbReference>
<dbReference type="PATRIC" id="fig|216595.4.peg.5898"/>
<dbReference type="eggNOG" id="COG0744">
    <property type="taxonomic scope" value="Bacteria"/>
</dbReference>
<dbReference type="HOGENOM" id="CLU_006354_1_1_6"/>
<dbReference type="OrthoDB" id="9766909at2"/>
<dbReference type="UniPathway" id="UPA00219"/>
<dbReference type="GO" id="GO:0009274">
    <property type="term" value="C:peptidoglycan-based cell wall"/>
    <property type="evidence" value="ECO:0007669"/>
    <property type="project" value="InterPro"/>
</dbReference>
<dbReference type="GO" id="GO:0005886">
    <property type="term" value="C:plasma membrane"/>
    <property type="evidence" value="ECO:0007669"/>
    <property type="project" value="UniProtKB-SubCell"/>
</dbReference>
<dbReference type="GO" id="GO:0016763">
    <property type="term" value="F:pentosyltransferase activity"/>
    <property type="evidence" value="ECO:0007669"/>
    <property type="project" value="InterPro"/>
</dbReference>
<dbReference type="GO" id="GO:0008955">
    <property type="term" value="F:peptidoglycan glycosyltransferase activity"/>
    <property type="evidence" value="ECO:0007669"/>
    <property type="project" value="UniProtKB-UniRule"/>
</dbReference>
<dbReference type="GO" id="GO:0071555">
    <property type="term" value="P:cell wall organization"/>
    <property type="evidence" value="ECO:0007669"/>
    <property type="project" value="UniProtKB-KW"/>
</dbReference>
<dbReference type="GO" id="GO:0009252">
    <property type="term" value="P:peptidoglycan biosynthetic process"/>
    <property type="evidence" value="ECO:0007669"/>
    <property type="project" value="UniProtKB-UniRule"/>
</dbReference>
<dbReference type="GO" id="GO:0008360">
    <property type="term" value="P:regulation of cell shape"/>
    <property type="evidence" value="ECO:0007669"/>
    <property type="project" value="UniProtKB-KW"/>
</dbReference>
<dbReference type="Gene3D" id="1.10.3810.10">
    <property type="entry name" value="Biosynthetic peptidoglycan transglycosylase-like"/>
    <property type="match status" value="1"/>
</dbReference>
<dbReference type="HAMAP" id="MF_00766">
    <property type="entry name" value="PGT_MtgA"/>
    <property type="match status" value="1"/>
</dbReference>
<dbReference type="InterPro" id="IPR001264">
    <property type="entry name" value="Glyco_trans_51"/>
</dbReference>
<dbReference type="InterPro" id="IPR023346">
    <property type="entry name" value="Lysozyme-like_dom_sf"/>
</dbReference>
<dbReference type="InterPro" id="IPR036950">
    <property type="entry name" value="PBP_transglycosylase"/>
</dbReference>
<dbReference type="InterPro" id="IPR011812">
    <property type="entry name" value="Pep_trsgly"/>
</dbReference>
<dbReference type="NCBIfam" id="TIGR02070">
    <property type="entry name" value="mono_pep_trsgly"/>
    <property type="match status" value="1"/>
</dbReference>
<dbReference type="PANTHER" id="PTHR30400:SF0">
    <property type="entry name" value="BIOSYNTHETIC PEPTIDOGLYCAN TRANSGLYCOSYLASE"/>
    <property type="match status" value="1"/>
</dbReference>
<dbReference type="PANTHER" id="PTHR30400">
    <property type="entry name" value="MONOFUNCTIONAL BIOSYNTHETIC PEPTIDOGLYCAN TRANSGLYCOSYLASE"/>
    <property type="match status" value="1"/>
</dbReference>
<dbReference type="Pfam" id="PF00912">
    <property type="entry name" value="Transgly"/>
    <property type="match status" value="1"/>
</dbReference>
<dbReference type="SUPFAM" id="SSF53955">
    <property type="entry name" value="Lysozyme-like"/>
    <property type="match status" value="1"/>
</dbReference>
<proteinExistence type="inferred from homology"/>
<comment type="function">
    <text evidence="1">Peptidoglycan polymerase that catalyzes glycan chain elongation from lipid-linked precursors.</text>
</comment>
<comment type="catalytic activity">
    <reaction evidence="1">
        <text>[GlcNAc-(1-&gt;4)-Mur2Ac(oyl-L-Ala-gamma-D-Glu-L-Lys-D-Ala-D-Ala)](n)-di-trans,octa-cis-undecaprenyl diphosphate + beta-D-GlcNAc-(1-&gt;4)-Mur2Ac(oyl-L-Ala-gamma-D-Glu-L-Lys-D-Ala-D-Ala)-di-trans,octa-cis-undecaprenyl diphosphate = [GlcNAc-(1-&gt;4)-Mur2Ac(oyl-L-Ala-gamma-D-Glu-L-Lys-D-Ala-D-Ala)](n+1)-di-trans,octa-cis-undecaprenyl diphosphate + di-trans,octa-cis-undecaprenyl diphosphate + H(+)</text>
        <dbReference type="Rhea" id="RHEA:23708"/>
        <dbReference type="Rhea" id="RHEA-COMP:9602"/>
        <dbReference type="Rhea" id="RHEA-COMP:9603"/>
        <dbReference type="ChEBI" id="CHEBI:15378"/>
        <dbReference type="ChEBI" id="CHEBI:58405"/>
        <dbReference type="ChEBI" id="CHEBI:60033"/>
        <dbReference type="ChEBI" id="CHEBI:78435"/>
        <dbReference type="EC" id="2.4.99.28"/>
    </reaction>
</comment>
<comment type="pathway">
    <text evidence="1">Cell wall biogenesis; peptidoglycan biosynthesis.</text>
</comment>
<comment type="subcellular location">
    <subcellularLocation>
        <location evidence="1">Cell inner membrane</location>
        <topology evidence="1">Single-pass membrane protein</topology>
    </subcellularLocation>
</comment>
<comment type="similarity">
    <text evidence="1">Belongs to the glycosyltransferase 51 family.</text>
</comment>
<reference key="1">
    <citation type="journal article" date="2009" name="Genome Biol.">
        <title>Genomic and genetic analyses of diversity and plant interactions of Pseudomonas fluorescens.</title>
        <authorList>
            <person name="Silby M.W."/>
            <person name="Cerdeno-Tarraga A.M."/>
            <person name="Vernikos G.S."/>
            <person name="Giddens S.R."/>
            <person name="Jackson R.W."/>
            <person name="Preston G.M."/>
            <person name="Zhang X.-X."/>
            <person name="Moon C.D."/>
            <person name="Gehrig S.M."/>
            <person name="Godfrey S.A.C."/>
            <person name="Knight C.G."/>
            <person name="Malone J.G."/>
            <person name="Robinson Z."/>
            <person name="Spiers A.J."/>
            <person name="Harris S."/>
            <person name="Challis G.L."/>
            <person name="Yaxley A.M."/>
            <person name="Harris D."/>
            <person name="Seeger K."/>
            <person name="Murphy L."/>
            <person name="Rutter S."/>
            <person name="Squares R."/>
            <person name="Quail M.A."/>
            <person name="Saunders E."/>
            <person name="Mavromatis K."/>
            <person name="Brettin T.S."/>
            <person name="Bentley S.D."/>
            <person name="Hothersall J."/>
            <person name="Stephens E."/>
            <person name="Thomas C.M."/>
            <person name="Parkhill J."/>
            <person name="Levy S.B."/>
            <person name="Rainey P.B."/>
            <person name="Thomson N.R."/>
        </authorList>
    </citation>
    <scope>NUCLEOTIDE SEQUENCE [LARGE SCALE GENOMIC DNA]</scope>
    <source>
        <strain>SBW25</strain>
    </source>
</reference>
<keyword id="KW-0997">Cell inner membrane</keyword>
<keyword id="KW-1003">Cell membrane</keyword>
<keyword id="KW-0133">Cell shape</keyword>
<keyword id="KW-0961">Cell wall biogenesis/degradation</keyword>
<keyword id="KW-0328">Glycosyltransferase</keyword>
<keyword id="KW-0472">Membrane</keyword>
<keyword id="KW-0573">Peptidoglycan synthesis</keyword>
<keyword id="KW-0808">Transferase</keyword>
<keyword id="KW-0812">Transmembrane</keyword>
<keyword id="KW-1133">Transmembrane helix</keyword>
<name>MTGA_PSEFS</name>
<organism>
    <name type="scientific">Pseudomonas fluorescens (strain SBW25)</name>
    <dbReference type="NCBI Taxonomy" id="216595"/>
    <lineage>
        <taxon>Bacteria</taxon>
        <taxon>Pseudomonadati</taxon>
        <taxon>Pseudomonadota</taxon>
        <taxon>Gammaproteobacteria</taxon>
        <taxon>Pseudomonadales</taxon>
        <taxon>Pseudomonadaceae</taxon>
        <taxon>Pseudomonas</taxon>
    </lineage>
</organism>
<sequence>MLRLLFKRFLNVVKWFAIASVLLVLLFRVVPPPFTALMVERKVESWFDGEPIDLQRSWVPWDEISDDLKVAVMAGEDQRFPQHWGFDFGAIQAAIQHNERGGSIRGASTLSQQVSKNLFLWAGRSYLRKGLEAWFTGLIEVLWPKQRILEVYLNSVEWDEGVFGAEAAARHHFGVSAKGLSRQQASYLAAVLPNPRVWSASHPTAYVARRAAWIRQQMSQLGGDGYLVELNNARKAPWSD</sequence>
<protein>
    <recommendedName>
        <fullName evidence="1">Biosynthetic peptidoglycan transglycosylase</fullName>
        <ecNumber evidence="1">2.4.99.28</ecNumber>
    </recommendedName>
    <alternativeName>
        <fullName evidence="1">Glycan polymerase</fullName>
    </alternativeName>
    <alternativeName>
        <fullName evidence="1">Peptidoglycan glycosyltransferase MtgA</fullName>
        <shortName evidence="1">PGT</shortName>
    </alternativeName>
</protein>
<accession>C3K3M0</accession>
<gene>
    <name evidence="1" type="primary">mtgA</name>
    <name type="ordered locus">PFLU_5776</name>
</gene>